<reference key="1">
    <citation type="submission" date="2009-03" db="EMBL/GenBank/DDBJ databases">
        <title>Comparison of the complete genome sequences of Rhodococcus erythropolis PR4 and Rhodococcus opacus B4.</title>
        <authorList>
            <person name="Takarada H."/>
            <person name="Sekine M."/>
            <person name="Hosoyama A."/>
            <person name="Yamada R."/>
            <person name="Fujisawa T."/>
            <person name="Omata S."/>
            <person name="Shimizu A."/>
            <person name="Tsukatani N."/>
            <person name="Tanikawa S."/>
            <person name="Fujita N."/>
            <person name="Harayama S."/>
        </authorList>
    </citation>
    <scope>NUCLEOTIDE SEQUENCE [LARGE SCALE GENOMIC DNA]</scope>
    <source>
        <strain>B4</strain>
    </source>
</reference>
<evidence type="ECO:0000255" key="1">
    <source>
        <dbReference type="HAMAP-Rule" id="MF_00144"/>
    </source>
</evidence>
<name>MNMA_RHOOB</name>
<comment type="function">
    <text evidence="1">Catalyzes the 2-thiolation of uridine at the wobble position (U34) of tRNA, leading to the formation of s(2)U34.</text>
</comment>
<comment type="catalytic activity">
    <reaction evidence="1">
        <text>S-sulfanyl-L-cysteinyl-[protein] + uridine(34) in tRNA + AH2 + ATP = 2-thiouridine(34) in tRNA + L-cysteinyl-[protein] + A + AMP + diphosphate + H(+)</text>
        <dbReference type="Rhea" id="RHEA:47032"/>
        <dbReference type="Rhea" id="RHEA-COMP:10131"/>
        <dbReference type="Rhea" id="RHEA-COMP:11726"/>
        <dbReference type="Rhea" id="RHEA-COMP:11727"/>
        <dbReference type="Rhea" id="RHEA-COMP:11728"/>
        <dbReference type="ChEBI" id="CHEBI:13193"/>
        <dbReference type="ChEBI" id="CHEBI:15378"/>
        <dbReference type="ChEBI" id="CHEBI:17499"/>
        <dbReference type="ChEBI" id="CHEBI:29950"/>
        <dbReference type="ChEBI" id="CHEBI:30616"/>
        <dbReference type="ChEBI" id="CHEBI:33019"/>
        <dbReference type="ChEBI" id="CHEBI:61963"/>
        <dbReference type="ChEBI" id="CHEBI:65315"/>
        <dbReference type="ChEBI" id="CHEBI:87170"/>
        <dbReference type="ChEBI" id="CHEBI:456215"/>
        <dbReference type="EC" id="2.8.1.13"/>
    </reaction>
</comment>
<comment type="subcellular location">
    <subcellularLocation>
        <location evidence="1">Cytoplasm</location>
    </subcellularLocation>
</comment>
<comment type="similarity">
    <text evidence="1">Belongs to the MnmA/TRMU family.</text>
</comment>
<protein>
    <recommendedName>
        <fullName evidence="1">tRNA-specific 2-thiouridylase MnmA</fullName>
        <ecNumber evidence="1">2.8.1.13</ecNumber>
    </recommendedName>
</protein>
<sequence>MRVLAAMSGGVDSAVAAARAVAAGHDVVGVHLALSAEPGTLRTGSRGCCSKEDAGDARRAADVLGIPFYVWDFADRFKEDVIDDFVASYAAGETPNPCLRCNEKIKFAALADRAIALGFDAVATGHYAQLENGVLRRAVDADKDQSYVLGVLTAEQLSRAMFPVGDTPKDRIREEAAERGLAVANKPDSHDICFIPSGDTRAFLGAHIGVRPGSVVDADSGEVLAEHEGVHGFTIGQRKGLGVQGPAADGQPRYVTSIEPETGTVRVGSARDLEVHAITADRAVWTSGRAPSGPVECTVQVRAHGGLAEAVAEAVDGGIRISLREPLTGVAKGQAAVLYRTDPAGDIVLGSGTISGTDARPNTQ</sequence>
<feature type="chain" id="PRO_1000198624" description="tRNA-specific 2-thiouridylase MnmA">
    <location>
        <begin position="1"/>
        <end position="364"/>
    </location>
</feature>
<feature type="region of interest" description="Interaction with tRNA" evidence="1">
    <location>
        <begin position="143"/>
        <end position="145"/>
    </location>
</feature>
<feature type="active site" description="Nucleophile" evidence="1">
    <location>
        <position position="101"/>
    </location>
</feature>
<feature type="active site" description="Cysteine persulfide intermediate" evidence="1">
    <location>
        <position position="193"/>
    </location>
</feature>
<feature type="binding site" evidence="1">
    <location>
        <begin position="6"/>
        <end position="13"/>
    </location>
    <ligand>
        <name>ATP</name>
        <dbReference type="ChEBI" id="CHEBI:30616"/>
    </ligand>
</feature>
<feature type="binding site" evidence="1">
    <location>
        <position position="32"/>
    </location>
    <ligand>
        <name>ATP</name>
        <dbReference type="ChEBI" id="CHEBI:30616"/>
    </ligand>
</feature>
<feature type="binding site" evidence="1">
    <location>
        <position position="125"/>
    </location>
    <ligand>
        <name>ATP</name>
        <dbReference type="ChEBI" id="CHEBI:30616"/>
    </ligand>
</feature>
<feature type="site" description="Interaction with tRNA" evidence="1">
    <location>
        <position position="126"/>
    </location>
</feature>
<feature type="site" description="Interaction with tRNA" evidence="1">
    <location>
        <position position="334"/>
    </location>
</feature>
<feature type="disulfide bond" description="Alternate" evidence="1">
    <location>
        <begin position="101"/>
        <end position="193"/>
    </location>
</feature>
<proteinExistence type="inferred from homology"/>
<accession>C1B1S2</accession>
<gene>
    <name evidence="1" type="primary">mnmA</name>
    <name type="ordered locus">ROP_65200</name>
</gene>
<keyword id="KW-0067">ATP-binding</keyword>
<keyword id="KW-0963">Cytoplasm</keyword>
<keyword id="KW-1015">Disulfide bond</keyword>
<keyword id="KW-0547">Nucleotide-binding</keyword>
<keyword id="KW-0694">RNA-binding</keyword>
<keyword id="KW-0808">Transferase</keyword>
<keyword id="KW-0819">tRNA processing</keyword>
<keyword id="KW-0820">tRNA-binding</keyword>
<organism>
    <name type="scientific">Rhodococcus opacus (strain B4)</name>
    <dbReference type="NCBI Taxonomy" id="632772"/>
    <lineage>
        <taxon>Bacteria</taxon>
        <taxon>Bacillati</taxon>
        <taxon>Actinomycetota</taxon>
        <taxon>Actinomycetes</taxon>
        <taxon>Mycobacteriales</taxon>
        <taxon>Nocardiaceae</taxon>
        <taxon>Rhodococcus</taxon>
    </lineage>
</organism>
<dbReference type="EC" id="2.8.1.13" evidence="1"/>
<dbReference type="EMBL" id="AP011115">
    <property type="protein sequence ID" value="BAH54767.1"/>
    <property type="molecule type" value="Genomic_DNA"/>
</dbReference>
<dbReference type="RefSeq" id="WP_015890214.1">
    <property type="nucleotide sequence ID" value="NC_012522.1"/>
</dbReference>
<dbReference type="SMR" id="C1B1S2"/>
<dbReference type="STRING" id="632772.ROP_65200"/>
<dbReference type="KEGG" id="rop:ROP_65200"/>
<dbReference type="PATRIC" id="fig|632772.20.peg.6805"/>
<dbReference type="HOGENOM" id="CLU_035188_0_2_11"/>
<dbReference type="OrthoDB" id="9800696at2"/>
<dbReference type="Proteomes" id="UP000002212">
    <property type="component" value="Chromosome"/>
</dbReference>
<dbReference type="GO" id="GO:0005737">
    <property type="term" value="C:cytoplasm"/>
    <property type="evidence" value="ECO:0007669"/>
    <property type="project" value="UniProtKB-SubCell"/>
</dbReference>
<dbReference type="GO" id="GO:0005524">
    <property type="term" value="F:ATP binding"/>
    <property type="evidence" value="ECO:0007669"/>
    <property type="project" value="UniProtKB-KW"/>
</dbReference>
<dbReference type="GO" id="GO:0000049">
    <property type="term" value="F:tRNA binding"/>
    <property type="evidence" value="ECO:0007669"/>
    <property type="project" value="UniProtKB-KW"/>
</dbReference>
<dbReference type="GO" id="GO:0103016">
    <property type="term" value="F:tRNA-uridine 2-sulfurtransferase activity"/>
    <property type="evidence" value="ECO:0007669"/>
    <property type="project" value="UniProtKB-EC"/>
</dbReference>
<dbReference type="GO" id="GO:0002143">
    <property type="term" value="P:tRNA wobble position uridine thiolation"/>
    <property type="evidence" value="ECO:0007669"/>
    <property type="project" value="TreeGrafter"/>
</dbReference>
<dbReference type="CDD" id="cd01998">
    <property type="entry name" value="MnmA_TRMU-like"/>
    <property type="match status" value="1"/>
</dbReference>
<dbReference type="FunFam" id="3.40.50.620:FF:000057">
    <property type="entry name" value="tRNA-specific 2-thiouridylase MnmA"/>
    <property type="match status" value="1"/>
</dbReference>
<dbReference type="Gene3D" id="2.30.30.280">
    <property type="entry name" value="Adenine nucleotide alpha hydrolases-like domains"/>
    <property type="match status" value="1"/>
</dbReference>
<dbReference type="Gene3D" id="3.40.50.620">
    <property type="entry name" value="HUPs"/>
    <property type="match status" value="1"/>
</dbReference>
<dbReference type="Gene3D" id="2.40.30.10">
    <property type="entry name" value="Translation factors"/>
    <property type="match status" value="1"/>
</dbReference>
<dbReference type="HAMAP" id="MF_00144">
    <property type="entry name" value="tRNA_thiouridyl_MnmA"/>
    <property type="match status" value="1"/>
</dbReference>
<dbReference type="InterPro" id="IPR004506">
    <property type="entry name" value="MnmA-like"/>
</dbReference>
<dbReference type="InterPro" id="IPR046885">
    <property type="entry name" value="MnmA-like_C"/>
</dbReference>
<dbReference type="InterPro" id="IPR046884">
    <property type="entry name" value="MnmA-like_central"/>
</dbReference>
<dbReference type="InterPro" id="IPR023382">
    <property type="entry name" value="MnmA-like_central_sf"/>
</dbReference>
<dbReference type="InterPro" id="IPR014729">
    <property type="entry name" value="Rossmann-like_a/b/a_fold"/>
</dbReference>
<dbReference type="NCBIfam" id="NF001138">
    <property type="entry name" value="PRK00143.1"/>
    <property type="match status" value="1"/>
</dbReference>
<dbReference type="NCBIfam" id="TIGR00420">
    <property type="entry name" value="trmU"/>
    <property type="match status" value="1"/>
</dbReference>
<dbReference type="PANTHER" id="PTHR11933:SF5">
    <property type="entry name" value="MITOCHONDRIAL TRNA-SPECIFIC 2-THIOURIDYLASE 1"/>
    <property type="match status" value="1"/>
</dbReference>
<dbReference type="PANTHER" id="PTHR11933">
    <property type="entry name" value="TRNA 5-METHYLAMINOMETHYL-2-THIOURIDYLATE -METHYLTRANSFERASE"/>
    <property type="match status" value="1"/>
</dbReference>
<dbReference type="Pfam" id="PF03054">
    <property type="entry name" value="tRNA_Me_trans"/>
    <property type="match status" value="1"/>
</dbReference>
<dbReference type="Pfam" id="PF20258">
    <property type="entry name" value="tRNA_Me_trans_C"/>
    <property type="match status" value="1"/>
</dbReference>
<dbReference type="Pfam" id="PF20259">
    <property type="entry name" value="tRNA_Me_trans_M"/>
    <property type="match status" value="1"/>
</dbReference>
<dbReference type="SUPFAM" id="SSF52402">
    <property type="entry name" value="Adenine nucleotide alpha hydrolases-like"/>
    <property type="match status" value="1"/>
</dbReference>